<organism>
    <name type="scientific">Brucella abortus (strain 2308)</name>
    <dbReference type="NCBI Taxonomy" id="359391"/>
    <lineage>
        <taxon>Bacteria</taxon>
        <taxon>Pseudomonadati</taxon>
        <taxon>Pseudomonadota</taxon>
        <taxon>Alphaproteobacteria</taxon>
        <taxon>Hyphomicrobiales</taxon>
        <taxon>Brucellaceae</taxon>
        <taxon>Brucella/Ochrobactrum group</taxon>
        <taxon>Brucella</taxon>
    </lineage>
</organism>
<sequence length="57" mass="6354">MAPLRPTRPCPECGKPSTREAYPFCSPRCKNIDLNRWLSGSYVIAGKPLGEEDENDS</sequence>
<keyword id="KW-0479">Metal-binding</keyword>
<keyword id="KW-1185">Reference proteome</keyword>
<keyword id="KW-0862">Zinc</keyword>
<dbReference type="EMBL" id="AM040264">
    <property type="protein sequence ID" value="CAJ10236.1"/>
    <property type="molecule type" value="Genomic_DNA"/>
</dbReference>
<dbReference type="SMR" id="Q2YPC3"/>
<dbReference type="STRING" id="359391.BAB1_0280"/>
<dbReference type="KEGG" id="bmf:BAB1_0280"/>
<dbReference type="HOGENOM" id="CLU_178280_2_0_5"/>
<dbReference type="Proteomes" id="UP000002719">
    <property type="component" value="Chromosome I"/>
</dbReference>
<dbReference type="GO" id="GO:0008657">
    <property type="term" value="F:DNA topoisomerase type II (double strand cut, ATP-hydrolyzing) inhibitor activity"/>
    <property type="evidence" value="ECO:0007669"/>
    <property type="project" value="UniProtKB-UniRule"/>
</dbReference>
<dbReference type="GO" id="GO:0008270">
    <property type="term" value="F:zinc ion binding"/>
    <property type="evidence" value="ECO:0007669"/>
    <property type="project" value="UniProtKB-UniRule"/>
</dbReference>
<dbReference type="GO" id="GO:0006355">
    <property type="term" value="P:regulation of DNA-templated transcription"/>
    <property type="evidence" value="ECO:0007669"/>
    <property type="project" value="InterPro"/>
</dbReference>
<dbReference type="Gene3D" id="3.30.50.10">
    <property type="entry name" value="Erythroid Transcription Factor GATA-1, subunit A"/>
    <property type="match status" value="1"/>
</dbReference>
<dbReference type="HAMAP" id="MF_00649">
    <property type="entry name" value="DNA_gyrase_inhibitor_YacG"/>
    <property type="match status" value="1"/>
</dbReference>
<dbReference type="InterPro" id="IPR005584">
    <property type="entry name" value="DNA_gyrase_inhibitor_YacG"/>
</dbReference>
<dbReference type="InterPro" id="IPR013088">
    <property type="entry name" value="Znf_NHR/GATA"/>
</dbReference>
<dbReference type="NCBIfam" id="NF002362">
    <property type="entry name" value="PRK01343.1"/>
    <property type="match status" value="1"/>
</dbReference>
<dbReference type="PANTHER" id="PTHR36150">
    <property type="entry name" value="DNA GYRASE INHIBITOR YACG"/>
    <property type="match status" value="1"/>
</dbReference>
<dbReference type="PANTHER" id="PTHR36150:SF1">
    <property type="entry name" value="DNA GYRASE INHIBITOR YACG"/>
    <property type="match status" value="1"/>
</dbReference>
<dbReference type="Pfam" id="PF03884">
    <property type="entry name" value="YacG"/>
    <property type="match status" value="1"/>
</dbReference>
<dbReference type="SUPFAM" id="SSF57716">
    <property type="entry name" value="Glucocorticoid receptor-like (DNA-binding domain)"/>
    <property type="match status" value="1"/>
</dbReference>
<proteinExistence type="inferred from homology"/>
<protein>
    <recommendedName>
        <fullName evidence="1">DNA gyrase inhibitor YacG</fullName>
    </recommendedName>
</protein>
<evidence type="ECO:0000255" key="1">
    <source>
        <dbReference type="HAMAP-Rule" id="MF_00649"/>
    </source>
</evidence>
<gene>
    <name evidence="1" type="primary">yacG</name>
    <name type="ordered locus">BAB1_0280</name>
</gene>
<name>YACG_BRUA2</name>
<feature type="chain" id="PRO_1000056968" description="DNA gyrase inhibitor YacG">
    <location>
        <begin position="1"/>
        <end position="57"/>
    </location>
</feature>
<feature type="binding site" evidence="1">
    <location>
        <position position="10"/>
    </location>
    <ligand>
        <name>Zn(2+)</name>
        <dbReference type="ChEBI" id="CHEBI:29105"/>
    </ligand>
</feature>
<feature type="binding site" evidence="1">
    <location>
        <position position="13"/>
    </location>
    <ligand>
        <name>Zn(2+)</name>
        <dbReference type="ChEBI" id="CHEBI:29105"/>
    </ligand>
</feature>
<feature type="binding site" evidence="1">
    <location>
        <position position="25"/>
    </location>
    <ligand>
        <name>Zn(2+)</name>
        <dbReference type="ChEBI" id="CHEBI:29105"/>
    </ligand>
</feature>
<feature type="binding site" evidence="1">
    <location>
        <position position="29"/>
    </location>
    <ligand>
        <name>Zn(2+)</name>
        <dbReference type="ChEBI" id="CHEBI:29105"/>
    </ligand>
</feature>
<reference key="1">
    <citation type="journal article" date="2005" name="Infect. Immun.">
        <title>Whole-genome analyses of speciation events in pathogenic Brucellae.</title>
        <authorList>
            <person name="Chain P.S."/>
            <person name="Comerci D.J."/>
            <person name="Tolmasky M.E."/>
            <person name="Larimer F.W."/>
            <person name="Malfatti S.A."/>
            <person name="Vergez L.M."/>
            <person name="Aguero F."/>
            <person name="Land M.L."/>
            <person name="Ugalde R.A."/>
            <person name="Garcia E."/>
        </authorList>
    </citation>
    <scope>NUCLEOTIDE SEQUENCE [LARGE SCALE GENOMIC DNA]</scope>
    <source>
        <strain>2308</strain>
    </source>
</reference>
<accession>Q2YPC3</accession>
<comment type="function">
    <text evidence="1">Inhibits all the catalytic activities of DNA gyrase by preventing its interaction with DNA. Acts by binding directly to the C-terminal domain of GyrB, which probably disrupts DNA binding by the gyrase.</text>
</comment>
<comment type="cofactor">
    <cofactor evidence="1">
        <name>Zn(2+)</name>
        <dbReference type="ChEBI" id="CHEBI:29105"/>
    </cofactor>
    <text evidence="1">Binds 1 zinc ion.</text>
</comment>
<comment type="subunit">
    <text evidence="1">Interacts with GyrB.</text>
</comment>
<comment type="similarity">
    <text evidence="1">Belongs to the DNA gyrase inhibitor YacG family.</text>
</comment>